<evidence type="ECO:0000250" key="1">
    <source>
        <dbReference type="UniProtKB" id="Q9RFC8"/>
    </source>
</evidence>
<evidence type="ECO:0000269" key="2">
    <source>
    </source>
</evidence>
<evidence type="ECO:0000305" key="3"/>
<evidence type="ECO:0000312" key="4">
    <source>
        <dbReference type="EMBL" id="AAP10078.1"/>
    </source>
</evidence>
<evidence type="ECO:0000312" key="5">
    <source>
        <dbReference type="Proteomes" id="UP000001417"/>
    </source>
</evidence>
<evidence type="ECO:0007829" key="6">
    <source>
        <dbReference type="PDB" id="4RYO"/>
    </source>
</evidence>
<feature type="chain" id="PRO_0000432574" description="Tryptophan-rich protein TspO">
    <location>
        <begin position="1"/>
        <end position="153"/>
    </location>
</feature>
<feature type="transmembrane region" description="Helical; Name=1" evidence="2">
    <location>
        <begin position="7"/>
        <end position="27"/>
    </location>
</feature>
<feature type="transmembrane region" description="Helical; Name=2" evidence="2">
    <location>
        <begin position="45"/>
        <end position="65"/>
    </location>
</feature>
<feature type="transmembrane region" description="Helical; Name=3" evidence="2">
    <location>
        <begin position="75"/>
        <end position="95"/>
    </location>
</feature>
<feature type="transmembrane region" description="Helical; Name=4" evidence="2">
    <location>
        <begin position="100"/>
        <end position="120"/>
    </location>
</feature>
<feature type="transmembrane region" description="Helical; Name=5" evidence="2">
    <location>
        <begin position="127"/>
        <end position="149"/>
    </location>
</feature>
<feature type="mutagenesis site" description="Decreases protoporphyrin IX photooxidation. Abolishes protoporphyrin IX photooxidation; when associated with F-138." evidence="2">
    <original>W</original>
    <variation>F</variation>
    <location>
        <position position="51"/>
    </location>
</feature>
<feature type="mutagenesis site" description="Abolishes protoporphyrin IX photooxidation. Abolishes protoporphyrin IX photooxidation; when associated with F-51." evidence="2">
    <original>W</original>
    <variation>F</variation>
    <location>
        <position position="138"/>
    </location>
</feature>
<feature type="mutagenesis site" description="Abolishes protoporphyrin IX photooxidation." evidence="2">
    <original>A</original>
    <variation>T</variation>
    <location>
        <position position="142"/>
    </location>
</feature>
<feature type="helix" evidence="6">
    <location>
        <begin position="5"/>
        <end position="17"/>
    </location>
</feature>
<feature type="helix" evidence="6">
    <location>
        <begin position="20"/>
        <end position="24"/>
    </location>
</feature>
<feature type="helix" evidence="6">
    <location>
        <begin position="29"/>
        <end position="34"/>
    </location>
</feature>
<feature type="helix" evidence="6">
    <location>
        <begin position="44"/>
        <end position="69"/>
    </location>
</feature>
<feature type="helix" evidence="6">
    <location>
        <begin position="74"/>
        <end position="95"/>
    </location>
</feature>
<feature type="helix" evidence="6">
    <location>
        <begin position="100"/>
        <end position="121"/>
    </location>
</feature>
<feature type="turn" evidence="6">
    <location>
        <begin position="122"/>
        <end position="124"/>
    </location>
</feature>
<feature type="helix" evidence="6">
    <location>
        <begin position="126"/>
        <end position="131"/>
    </location>
</feature>
<feature type="helix" evidence="6">
    <location>
        <begin position="133"/>
        <end position="151"/>
    </location>
</feature>
<accession>Q81BL7</accession>
<dbReference type="EMBL" id="AE016877">
    <property type="protein sequence ID" value="AAP10078.1"/>
    <property type="molecule type" value="Genomic_DNA"/>
</dbReference>
<dbReference type="RefSeq" id="NP_832877.1">
    <property type="nucleotide sequence ID" value="NC_004722.1"/>
</dbReference>
<dbReference type="PDB" id="4RYI">
    <property type="method" value="X-ray"/>
    <property type="resolution" value="3.49 A"/>
    <property type="chains" value="A/B=1-153"/>
</dbReference>
<dbReference type="PDB" id="4RYJ">
    <property type="method" value="X-ray"/>
    <property type="resolution" value="4.10 A"/>
    <property type="chains" value="A/B=1-153"/>
</dbReference>
<dbReference type="PDB" id="4RYM">
    <property type="method" value="X-ray"/>
    <property type="resolution" value="2.80 A"/>
    <property type="chains" value="A=1-153"/>
</dbReference>
<dbReference type="PDB" id="4RYN">
    <property type="method" value="X-ray"/>
    <property type="resolution" value="2.00 A"/>
    <property type="chains" value="A=1-153"/>
</dbReference>
<dbReference type="PDB" id="4RYO">
    <property type="method" value="X-ray"/>
    <property type="resolution" value="1.60 A"/>
    <property type="chains" value="A=1-153"/>
</dbReference>
<dbReference type="PDB" id="4RYQ">
    <property type="method" value="X-ray"/>
    <property type="resolution" value="1.70 A"/>
    <property type="chains" value="A=1-153"/>
</dbReference>
<dbReference type="PDB" id="4RYR">
    <property type="method" value="X-ray"/>
    <property type="resolution" value="1.70 A"/>
    <property type="chains" value="A=1-153"/>
</dbReference>
<dbReference type="PDBsum" id="4RYI"/>
<dbReference type="PDBsum" id="4RYJ"/>
<dbReference type="PDBsum" id="4RYM"/>
<dbReference type="PDBsum" id="4RYN"/>
<dbReference type="PDBsum" id="4RYO"/>
<dbReference type="PDBsum" id="4RYQ"/>
<dbReference type="PDBsum" id="4RYR"/>
<dbReference type="SMR" id="Q81BL7"/>
<dbReference type="DIP" id="DIP-61487N"/>
<dbReference type="STRING" id="226900.BC_3136"/>
<dbReference type="DNASU" id="1205483"/>
<dbReference type="KEGG" id="bce:BC3136"/>
<dbReference type="PATRIC" id="fig|226900.8.peg.3220"/>
<dbReference type="HOGENOM" id="CLU_091805_3_0_9"/>
<dbReference type="EvolutionaryTrace" id="Q81BL7"/>
<dbReference type="Proteomes" id="UP000001417">
    <property type="component" value="Chromosome"/>
</dbReference>
<dbReference type="GO" id="GO:0016020">
    <property type="term" value="C:membrane"/>
    <property type="evidence" value="ECO:0000314"/>
    <property type="project" value="UniProtKB"/>
</dbReference>
<dbReference type="GO" id="GO:0005886">
    <property type="term" value="C:plasma membrane"/>
    <property type="evidence" value="ECO:0007669"/>
    <property type="project" value="UniProtKB-SubCell"/>
</dbReference>
<dbReference type="GO" id="GO:0042802">
    <property type="term" value="F:identical protein binding"/>
    <property type="evidence" value="ECO:0000353"/>
    <property type="project" value="IntAct"/>
</dbReference>
<dbReference type="GO" id="GO:0046906">
    <property type="term" value="F:tetrapyrrole binding"/>
    <property type="evidence" value="ECO:0000314"/>
    <property type="project" value="UniProtKB"/>
</dbReference>
<dbReference type="GO" id="GO:0033013">
    <property type="term" value="P:tetrapyrrole metabolic process"/>
    <property type="evidence" value="ECO:0000314"/>
    <property type="project" value="UniProtKB"/>
</dbReference>
<dbReference type="CDD" id="cd15904">
    <property type="entry name" value="TSPO_MBR"/>
    <property type="match status" value="1"/>
</dbReference>
<dbReference type="FunFam" id="1.20.1260.100:FF:000001">
    <property type="entry name" value="translocator protein 2"/>
    <property type="match status" value="1"/>
</dbReference>
<dbReference type="Gene3D" id="1.20.1260.100">
    <property type="entry name" value="TspO/MBR protein"/>
    <property type="match status" value="1"/>
</dbReference>
<dbReference type="InterPro" id="IPR038330">
    <property type="entry name" value="TspO/MBR-related_sf"/>
</dbReference>
<dbReference type="InterPro" id="IPR004307">
    <property type="entry name" value="TspO_MBR"/>
</dbReference>
<dbReference type="PANTHER" id="PTHR10057">
    <property type="entry name" value="PERIPHERAL-TYPE BENZODIAZEPINE RECEPTOR"/>
    <property type="match status" value="1"/>
</dbReference>
<dbReference type="PANTHER" id="PTHR10057:SF0">
    <property type="entry name" value="TRANSLOCATOR PROTEIN"/>
    <property type="match status" value="1"/>
</dbReference>
<dbReference type="Pfam" id="PF03073">
    <property type="entry name" value="TspO_MBR"/>
    <property type="match status" value="1"/>
</dbReference>
<dbReference type="PIRSF" id="PIRSF005859">
    <property type="entry name" value="PBR"/>
    <property type="match status" value="1"/>
</dbReference>
<protein>
    <recommendedName>
        <fullName evidence="3">Tryptophan-rich protein TspO</fullName>
    </recommendedName>
</protein>
<keyword id="KW-0002">3D-structure</keyword>
<keyword id="KW-1003">Cell membrane</keyword>
<keyword id="KW-0472">Membrane</keyword>
<keyword id="KW-1185">Reference proteome</keyword>
<keyword id="KW-0812">Transmembrane</keyword>
<keyword id="KW-1133">Transmembrane helix</keyword>
<keyword id="KW-0813">Transport</keyword>
<comment type="function">
    <text evidence="1 2">Binds tetrapyrroles and promotes the photooxidative degradation of protoporphyrin IX (PubMed:25635100). Can bind the benzodiazepine receptor agonist PK-11195 (in vitro); this interferes with photooxidative tetrapyrrole degradation (PubMed:25635100). May play a role in the transmembrane transport of tetrapyrroles and similar compounds (By similarity).</text>
</comment>
<comment type="subunit">
    <text evidence="2">Monomer and homodimer. May also form higher oligomers.</text>
</comment>
<comment type="interaction">
    <interactant intactId="EBI-16140888">
        <id>Q81BL7</id>
    </interactant>
    <interactant intactId="EBI-16140888">
        <id>Q81BL7</id>
        <label>tspO</label>
    </interactant>
    <organismsDiffer>false</organismsDiffer>
    <experiments>2</experiments>
</comment>
<comment type="subcellular location">
    <subcellularLocation>
        <location evidence="3">Cell membrane</location>
        <topology evidence="2">Multi-pass membrane protein</topology>
    </subcellularLocation>
    <subcellularLocation>
        <location evidence="2">Membrane</location>
        <topology evidence="2">Multi-pass membrane protein</topology>
    </subcellularLocation>
</comment>
<comment type="similarity">
    <text evidence="3">Belongs to the TspO/BZRP family.</text>
</comment>
<proteinExistence type="evidence at protein level"/>
<organism evidence="4">
    <name type="scientific">Bacillus cereus (strain ATCC 14579 / DSM 31 / CCUG 7414 / JCM 2152 / NBRC 15305 / NCIMB 9373 / NCTC 2599 / NRRL B-3711)</name>
    <dbReference type="NCBI Taxonomy" id="226900"/>
    <lineage>
        <taxon>Bacteria</taxon>
        <taxon>Bacillati</taxon>
        <taxon>Bacillota</taxon>
        <taxon>Bacilli</taxon>
        <taxon>Bacillales</taxon>
        <taxon>Bacillaceae</taxon>
        <taxon>Bacillus</taxon>
        <taxon>Bacillus cereus group</taxon>
    </lineage>
</organism>
<reference evidence="4 5" key="1">
    <citation type="journal article" date="2003" name="Nature">
        <title>Genome sequence of Bacillus cereus and comparative analysis with Bacillus anthracis.</title>
        <authorList>
            <person name="Ivanova N."/>
            <person name="Sorokin A."/>
            <person name="Anderson I."/>
            <person name="Galleron N."/>
            <person name="Candelon B."/>
            <person name="Kapatral V."/>
            <person name="Bhattacharyya A."/>
            <person name="Reznik G."/>
            <person name="Mikhailova N."/>
            <person name="Lapidus A."/>
            <person name="Chu L."/>
            <person name="Mazur M."/>
            <person name="Goltsman E."/>
            <person name="Larsen N."/>
            <person name="D'Souza M."/>
            <person name="Walunas T."/>
            <person name="Grechkin Y."/>
            <person name="Pusch G."/>
            <person name="Haselkorn R."/>
            <person name="Fonstein M."/>
            <person name="Ehrlich S.D."/>
            <person name="Overbeek R."/>
            <person name="Kyrpides N.C."/>
        </authorList>
    </citation>
    <scope>NUCLEOTIDE SEQUENCE [LARGE SCALE GENOMIC DNA]</scope>
    <source>
        <strain evidence="5">ATCC 14579 / DSM 31 / CCUG 7414 / JCM 2152 / NBRC 15305 / NCIMB 9373 / NCTC 2599 / NRRL B-3711</strain>
    </source>
</reference>
<reference key="2">
    <citation type="journal article" date="2015" name="Science">
        <title>Structure and activity of tryptophan-rich TSPO proteins.</title>
        <authorList>
            <person name="Guo Y."/>
            <person name="Kalathur R.C."/>
            <person name="Liu Q."/>
            <person name="Kloss B."/>
            <person name="Bruni R."/>
            <person name="Ginter C."/>
            <person name="Kloppmann E."/>
            <person name="Rost B."/>
            <person name="Hendrickson W.A."/>
        </authorList>
    </citation>
    <scope>X-RAY CRYSTALLOGRAPHY (1.7 ANGSTROMS) IN COMPLEX WITH PK11195</scope>
    <scope>FUNCTION</scope>
    <scope>SUBCELLULAR LOCATION</scope>
    <scope>SUBUNIT</scope>
    <scope>MUTAGENESIS OF TRP-51; TRP-138 AND ALA-142</scope>
</reference>
<sequence>MFMKKSSIIVFFLTYGLFYVSSVLFPIDRTWYDALEKPSWTPPGMTIGMIWAVLFGLIALSVAIIYNNYGFKPKTFWFLFLLNYIFNQAFSYFQFSQKNLFLATVDCLLVAITTLLLIMFSSNLSKVSAWLLIPYFLWSAFATYLSWTIYSIN</sequence>
<gene>
    <name type="primary">tspO</name>
    <name evidence="4" type="ordered locus">BC_3136</name>
</gene>
<name>TSPO_BACCR</name>